<feature type="chain" id="PRO_1000097578" description="Queuine tRNA-ribosyltransferase">
    <location>
        <begin position="1"/>
        <end position="381"/>
    </location>
</feature>
<feature type="region of interest" description="RNA binding" evidence="1">
    <location>
        <begin position="248"/>
        <end position="254"/>
    </location>
</feature>
<feature type="region of interest" description="RNA binding; important for wobble base 34 recognition" evidence="1">
    <location>
        <begin position="272"/>
        <end position="276"/>
    </location>
</feature>
<feature type="active site" description="Proton acceptor" evidence="1">
    <location>
        <position position="92"/>
    </location>
</feature>
<feature type="active site" description="Nucleophile" evidence="1">
    <location>
        <position position="267"/>
    </location>
</feature>
<feature type="binding site" evidence="1">
    <location>
        <begin position="92"/>
        <end position="96"/>
    </location>
    <ligand>
        <name>substrate</name>
    </ligand>
</feature>
<feature type="binding site" evidence="1">
    <location>
        <position position="146"/>
    </location>
    <ligand>
        <name>substrate</name>
    </ligand>
</feature>
<feature type="binding site" evidence="1">
    <location>
        <position position="190"/>
    </location>
    <ligand>
        <name>substrate</name>
    </ligand>
</feature>
<feature type="binding site" evidence="1">
    <location>
        <position position="217"/>
    </location>
    <ligand>
        <name>substrate</name>
    </ligand>
</feature>
<feature type="binding site" evidence="1">
    <location>
        <position position="305"/>
    </location>
    <ligand>
        <name>Zn(2+)</name>
        <dbReference type="ChEBI" id="CHEBI:29105"/>
    </ligand>
</feature>
<feature type="binding site" evidence="1">
    <location>
        <position position="307"/>
    </location>
    <ligand>
        <name>Zn(2+)</name>
        <dbReference type="ChEBI" id="CHEBI:29105"/>
    </ligand>
</feature>
<feature type="binding site" evidence="1">
    <location>
        <position position="310"/>
    </location>
    <ligand>
        <name>Zn(2+)</name>
        <dbReference type="ChEBI" id="CHEBI:29105"/>
    </ligand>
</feature>
<feature type="binding site" evidence="1">
    <location>
        <position position="337"/>
    </location>
    <ligand>
        <name>Zn(2+)</name>
        <dbReference type="ChEBI" id="CHEBI:29105"/>
    </ligand>
</feature>
<comment type="function">
    <text evidence="1">Catalyzes the base-exchange of a guanine (G) residue with the queuine precursor 7-aminomethyl-7-deazaguanine (PreQ1) at position 34 (anticodon wobble position) in tRNAs with GU(N) anticodons (tRNA-Asp, -Asn, -His and -Tyr). Catalysis occurs through a double-displacement mechanism. The nucleophile active site attacks the C1' of nucleotide 34 to detach the guanine base from the RNA, forming a covalent enzyme-RNA intermediate. The proton acceptor active site deprotonates the incoming PreQ1, allowing a nucleophilic attack on the C1' of the ribose to form the product. After dissociation, two additional enzymatic reactions on the tRNA convert PreQ1 to queuine (Q), resulting in the hypermodified nucleoside queuosine (7-(((4,5-cis-dihydroxy-2-cyclopenten-1-yl)amino)methyl)-7-deazaguanosine).</text>
</comment>
<comment type="catalytic activity">
    <reaction evidence="1">
        <text>7-aminomethyl-7-carbaguanine + guanosine(34) in tRNA = 7-aminomethyl-7-carbaguanosine(34) in tRNA + guanine</text>
        <dbReference type="Rhea" id="RHEA:24104"/>
        <dbReference type="Rhea" id="RHEA-COMP:10341"/>
        <dbReference type="Rhea" id="RHEA-COMP:10342"/>
        <dbReference type="ChEBI" id="CHEBI:16235"/>
        <dbReference type="ChEBI" id="CHEBI:58703"/>
        <dbReference type="ChEBI" id="CHEBI:74269"/>
        <dbReference type="ChEBI" id="CHEBI:82833"/>
        <dbReference type="EC" id="2.4.2.29"/>
    </reaction>
</comment>
<comment type="cofactor">
    <cofactor evidence="1">
        <name>Zn(2+)</name>
        <dbReference type="ChEBI" id="CHEBI:29105"/>
    </cofactor>
    <text evidence="1">Binds 1 zinc ion per subunit.</text>
</comment>
<comment type="pathway">
    <text evidence="1">tRNA modification; tRNA-queuosine biosynthesis.</text>
</comment>
<comment type="subunit">
    <text evidence="1">Homodimer. Within each dimer, one monomer is responsible for RNA recognition and catalysis, while the other monomer binds to the replacement base PreQ1.</text>
</comment>
<comment type="similarity">
    <text evidence="1">Belongs to the queuine tRNA-ribosyltransferase family.</text>
</comment>
<proteinExistence type="inferred from homology"/>
<keyword id="KW-0328">Glycosyltransferase</keyword>
<keyword id="KW-0479">Metal-binding</keyword>
<keyword id="KW-0671">Queuosine biosynthesis</keyword>
<keyword id="KW-0808">Transferase</keyword>
<keyword id="KW-0819">tRNA processing</keyword>
<keyword id="KW-0862">Zinc</keyword>
<accession>B2SIN8</accession>
<reference key="1">
    <citation type="journal article" date="2008" name="BMC Genomics">
        <title>Genome sequence and rapid evolution of the rice pathogen Xanthomonas oryzae pv. oryzae PXO99A.</title>
        <authorList>
            <person name="Salzberg S.L."/>
            <person name="Sommer D.D."/>
            <person name="Schatz M.C."/>
            <person name="Phillippy A.M."/>
            <person name="Rabinowicz P.D."/>
            <person name="Tsuge S."/>
            <person name="Furutani A."/>
            <person name="Ochiai H."/>
            <person name="Delcher A.L."/>
            <person name="Kelley D."/>
            <person name="Madupu R."/>
            <person name="Puiu D."/>
            <person name="Radune D."/>
            <person name="Shumway M."/>
            <person name="Trapnell C."/>
            <person name="Aparna G."/>
            <person name="Jha G."/>
            <person name="Pandey A."/>
            <person name="Patil P.B."/>
            <person name="Ishihara H."/>
            <person name="Meyer D.F."/>
            <person name="Szurek B."/>
            <person name="Verdier V."/>
            <person name="Koebnik R."/>
            <person name="Dow J.M."/>
            <person name="Ryan R.P."/>
            <person name="Hirata H."/>
            <person name="Tsuyumu S."/>
            <person name="Won Lee S."/>
            <person name="Seo Y.-S."/>
            <person name="Sriariyanum M."/>
            <person name="Ronald P.C."/>
            <person name="Sonti R.V."/>
            <person name="Van Sluys M.-A."/>
            <person name="Leach J.E."/>
            <person name="White F.F."/>
            <person name="Bogdanove A.J."/>
        </authorList>
    </citation>
    <scope>NUCLEOTIDE SEQUENCE [LARGE SCALE GENOMIC DNA]</scope>
    <source>
        <strain>PXO99A</strain>
    </source>
</reference>
<evidence type="ECO:0000255" key="1">
    <source>
        <dbReference type="HAMAP-Rule" id="MF_00168"/>
    </source>
</evidence>
<dbReference type="EC" id="2.4.2.29" evidence="1"/>
<dbReference type="EMBL" id="CP000967">
    <property type="protein sequence ID" value="ACD58683.1"/>
    <property type="molecule type" value="Genomic_DNA"/>
</dbReference>
<dbReference type="RefSeq" id="WP_011259125.1">
    <property type="nucleotide sequence ID" value="NC_010717.2"/>
</dbReference>
<dbReference type="SMR" id="B2SIN8"/>
<dbReference type="KEGG" id="xop:PXO_00525"/>
<dbReference type="eggNOG" id="COG0343">
    <property type="taxonomic scope" value="Bacteria"/>
</dbReference>
<dbReference type="HOGENOM" id="CLU_022060_0_1_6"/>
<dbReference type="UniPathway" id="UPA00392"/>
<dbReference type="Proteomes" id="UP000001740">
    <property type="component" value="Chromosome"/>
</dbReference>
<dbReference type="GO" id="GO:0005829">
    <property type="term" value="C:cytosol"/>
    <property type="evidence" value="ECO:0007669"/>
    <property type="project" value="TreeGrafter"/>
</dbReference>
<dbReference type="GO" id="GO:0046872">
    <property type="term" value="F:metal ion binding"/>
    <property type="evidence" value="ECO:0007669"/>
    <property type="project" value="UniProtKB-KW"/>
</dbReference>
<dbReference type="GO" id="GO:0008479">
    <property type="term" value="F:tRNA-guanosine(34) queuine transglycosylase activity"/>
    <property type="evidence" value="ECO:0007669"/>
    <property type="project" value="UniProtKB-UniRule"/>
</dbReference>
<dbReference type="GO" id="GO:0008616">
    <property type="term" value="P:queuosine biosynthetic process"/>
    <property type="evidence" value="ECO:0007669"/>
    <property type="project" value="UniProtKB-UniRule"/>
</dbReference>
<dbReference type="GO" id="GO:0002099">
    <property type="term" value="P:tRNA wobble guanine modification"/>
    <property type="evidence" value="ECO:0007669"/>
    <property type="project" value="TreeGrafter"/>
</dbReference>
<dbReference type="GO" id="GO:0101030">
    <property type="term" value="P:tRNA-guanine transglycosylation"/>
    <property type="evidence" value="ECO:0007669"/>
    <property type="project" value="InterPro"/>
</dbReference>
<dbReference type="FunFam" id="3.20.20.105:FF:000001">
    <property type="entry name" value="Queuine tRNA-ribosyltransferase"/>
    <property type="match status" value="1"/>
</dbReference>
<dbReference type="Gene3D" id="3.20.20.105">
    <property type="entry name" value="Queuine tRNA-ribosyltransferase-like"/>
    <property type="match status" value="1"/>
</dbReference>
<dbReference type="HAMAP" id="MF_00168">
    <property type="entry name" value="Q_tRNA_Tgt"/>
    <property type="match status" value="1"/>
</dbReference>
<dbReference type="InterPro" id="IPR050076">
    <property type="entry name" value="ArchSynthase1/Queuine_TRR"/>
</dbReference>
<dbReference type="InterPro" id="IPR004803">
    <property type="entry name" value="TGT"/>
</dbReference>
<dbReference type="InterPro" id="IPR036511">
    <property type="entry name" value="TGT-like_sf"/>
</dbReference>
<dbReference type="InterPro" id="IPR002616">
    <property type="entry name" value="tRNA_ribo_trans-like"/>
</dbReference>
<dbReference type="NCBIfam" id="TIGR00430">
    <property type="entry name" value="Q_tRNA_tgt"/>
    <property type="match status" value="1"/>
</dbReference>
<dbReference type="NCBIfam" id="TIGR00449">
    <property type="entry name" value="tgt_general"/>
    <property type="match status" value="1"/>
</dbReference>
<dbReference type="PANTHER" id="PTHR46499">
    <property type="entry name" value="QUEUINE TRNA-RIBOSYLTRANSFERASE"/>
    <property type="match status" value="1"/>
</dbReference>
<dbReference type="PANTHER" id="PTHR46499:SF1">
    <property type="entry name" value="QUEUINE TRNA-RIBOSYLTRANSFERASE"/>
    <property type="match status" value="1"/>
</dbReference>
<dbReference type="Pfam" id="PF01702">
    <property type="entry name" value="TGT"/>
    <property type="match status" value="1"/>
</dbReference>
<dbReference type="SUPFAM" id="SSF51713">
    <property type="entry name" value="tRNA-guanine transglycosylase"/>
    <property type="match status" value="1"/>
</dbReference>
<name>TGT_XANOP</name>
<protein>
    <recommendedName>
        <fullName evidence="1">Queuine tRNA-ribosyltransferase</fullName>
        <ecNumber evidence="1">2.4.2.29</ecNumber>
    </recommendedName>
    <alternativeName>
        <fullName evidence="1">Guanine insertion enzyme</fullName>
    </alternativeName>
    <alternativeName>
        <fullName evidence="1">tRNA-guanine transglycosylase</fullName>
    </alternativeName>
</protein>
<sequence>MSRLQFQLQATDGHARRGRLTFPRGTVETPAFMPVGTYGSVKGILPEHIRALGAEIILGNTFHLYLRPGLDVIGDHGGLHGFARWDGPILTDSGGFQVFSLAHRRKITEQGVTFSSPTDGARVFLGPEESMKIQKVLDSDIVMIFDECTPYPATEDLARRSMELSLRWAQRSRDAHDGLGNDAALFGIVQGGVHPDLRSRSLDGLQSIGFDGYAIGGLAVGEPEHERNAMLEHLHPRLPAECPRYLMGVGRPEDLVEGVARGVDMFDCVMPTRNARNGHYFTSFGTVRIRNAKYERDLDTIEPGCGCHACSSGYTRSYLRHLDRCNEMLAPMLGTLHNLWYYEKLMADMRAAIASGTFVEFRRSFYAARGATTPPLPGETS</sequence>
<organism>
    <name type="scientific">Xanthomonas oryzae pv. oryzae (strain PXO99A)</name>
    <dbReference type="NCBI Taxonomy" id="360094"/>
    <lineage>
        <taxon>Bacteria</taxon>
        <taxon>Pseudomonadati</taxon>
        <taxon>Pseudomonadota</taxon>
        <taxon>Gammaproteobacteria</taxon>
        <taxon>Lysobacterales</taxon>
        <taxon>Lysobacteraceae</taxon>
        <taxon>Xanthomonas</taxon>
    </lineage>
</organism>
<gene>
    <name evidence="1" type="primary">tgt</name>
    <name type="ordered locus">PXO_00525</name>
</gene>